<accession>Q64NV3</accession>
<protein>
    <recommendedName>
        <fullName evidence="1">GTPase Der</fullName>
    </recommendedName>
    <alternativeName>
        <fullName evidence="1">GTP-binding protein EngA</fullName>
    </alternativeName>
</protein>
<comment type="function">
    <text evidence="1">GTPase that plays an essential role in the late steps of ribosome biogenesis.</text>
</comment>
<comment type="subunit">
    <text evidence="1">Associates with the 50S ribosomal subunit.</text>
</comment>
<comment type="similarity">
    <text evidence="1">Belongs to the TRAFAC class TrmE-Era-EngA-EngB-Septin-like GTPase superfamily. EngA (Der) GTPase family.</text>
</comment>
<keyword id="KW-0342">GTP-binding</keyword>
<keyword id="KW-0547">Nucleotide-binding</keyword>
<keyword id="KW-0677">Repeat</keyword>
<keyword id="KW-0690">Ribosome biogenesis</keyword>
<organism>
    <name type="scientific">Bacteroides fragilis (strain YCH46)</name>
    <dbReference type="NCBI Taxonomy" id="295405"/>
    <lineage>
        <taxon>Bacteria</taxon>
        <taxon>Pseudomonadati</taxon>
        <taxon>Bacteroidota</taxon>
        <taxon>Bacteroidia</taxon>
        <taxon>Bacteroidales</taxon>
        <taxon>Bacteroidaceae</taxon>
        <taxon>Bacteroides</taxon>
    </lineage>
</organism>
<feature type="chain" id="PRO_1000011563" description="GTPase Der">
    <location>
        <begin position="1"/>
        <end position="437"/>
    </location>
</feature>
<feature type="domain" description="EngA-type G 1">
    <location>
        <begin position="3"/>
        <end position="167"/>
    </location>
</feature>
<feature type="domain" description="EngA-type G 2">
    <location>
        <begin position="176"/>
        <end position="352"/>
    </location>
</feature>
<feature type="domain" description="KH-like" evidence="1">
    <location>
        <begin position="353"/>
        <end position="437"/>
    </location>
</feature>
<feature type="binding site" evidence="1">
    <location>
        <begin position="9"/>
        <end position="16"/>
    </location>
    <ligand>
        <name>GTP</name>
        <dbReference type="ChEBI" id="CHEBI:37565"/>
        <label>1</label>
    </ligand>
</feature>
<feature type="binding site" evidence="1">
    <location>
        <begin position="56"/>
        <end position="60"/>
    </location>
    <ligand>
        <name>GTP</name>
        <dbReference type="ChEBI" id="CHEBI:37565"/>
        <label>1</label>
    </ligand>
</feature>
<feature type="binding site" evidence="1">
    <location>
        <begin position="119"/>
        <end position="122"/>
    </location>
    <ligand>
        <name>GTP</name>
        <dbReference type="ChEBI" id="CHEBI:37565"/>
        <label>1</label>
    </ligand>
</feature>
<feature type="binding site" evidence="1">
    <location>
        <begin position="182"/>
        <end position="189"/>
    </location>
    <ligand>
        <name>GTP</name>
        <dbReference type="ChEBI" id="CHEBI:37565"/>
        <label>2</label>
    </ligand>
</feature>
<feature type="binding site" evidence="1">
    <location>
        <begin position="229"/>
        <end position="233"/>
    </location>
    <ligand>
        <name>GTP</name>
        <dbReference type="ChEBI" id="CHEBI:37565"/>
        <label>2</label>
    </ligand>
</feature>
<feature type="binding site" evidence="1">
    <location>
        <begin position="294"/>
        <end position="297"/>
    </location>
    <ligand>
        <name>GTP</name>
        <dbReference type="ChEBI" id="CHEBI:37565"/>
        <label>2</label>
    </ligand>
</feature>
<gene>
    <name evidence="1" type="primary">der</name>
    <name type="synonym">engA</name>
    <name type="ordered locus">BF4087</name>
</gene>
<evidence type="ECO:0000255" key="1">
    <source>
        <dbReference type="HAMAP-Rule" id="MF_00195"/>
    </source>
</evidence>
<name>DER_BACFR</name>
<dbReference type="EMBL" id="AP006841">
    <property type="protein sequence ID" value="BAD50829.1"/>
    <property type="molecule type" value="Genomic_DNA"/>
</dbReference>
<dbReference type="RefSeq" id="WP_005782289.1">
    <property type="nucleotide sequence ID" value="NZ_UYXF01000013.1"/>
</dbReference>
<dbReference type="RefSeq" id="YP_101363.1">
    <property type="nucleotide sequence ID" value="NC_006347.1"/>
</dbReference>
<dbReference type="SMR" id="Q64NV3"/>
<dbReference type="STRING" id="295405.BF4087"/>
<dbReference type="GeneID" id="93105220"/>
<dbReference type="KEGG" id="bfr:BF4087"/>
<dbReference type="PATRIC" id="fig|295405.11.peg.3934"/>
<dbReference type="HOGENOM" id="CLU_016077_6_2_10"/>
<dbReference type="OrthoDB" id="9805918at2"/>
<dbReference type="Proteomes" id="UP000002197">
    <property type="component" value="Chromosome"/>
</dbReference>
<dbReference type="GO" id="GO:0005525">
    <property type="term" value="F:GTP binding"/>
    <property type="evidence" value="ECO:0007669"/>
    <property type="project" value="UniProtKB-UniRule"/>
</dbReference>
<dbReference type="GO" id="GO:0043022">
    <property type="term" value="F:ribosome binding"/>
    <property type="evidence" value="ECO:0007669"/>
    <property type="project" value="TreeGrafter"/>
</dbReference>
<dbReference type="GO" id="GO:0042254">
    <property type="term" value="P:ribosome biogenesis"/>
    <property type="evidence" value="ECO:0007669"/>
    <property type="project" value="UniProtKB-KW"/>
</dbReference>
<dbReference type="CDD" id="cd01894">
    <property type="entry name" value="EngA1"/>
    <property type="match status" value="1"/>
</dbReference>
<dbReference type="CDD" id="cd01895">
    <property type="entry name" value="EngA2"/>
    <property type="match status" value="1"/>
</dbReference>
<dbReference type="FunFam" id="3.30.300.20:FF:000004">
    <property type="entry name" value="GTPase Der"/>
    <property type="match status" value="1"/>
</dbReference>
<dbReference type="FunFam" id="3.40.50.300:FF:000040">
    <property type="entry name" value="GTPase Der"/>
    <property type="match status" value="1"/>
</dbReference>
<dbReference type="FunFam" id="3.40.50.300:FF:000953">
    <property type="entry name" value="GTPase Der"/>
    <property type="match status" value="1"/>
</dbReference>
<dbReference type="Gene3D" id="3.30.300.20">
    <property type="match status" value="1"/>
</dbReference>
<dbReference type="Gene3D" id="3.40.50.300">
    <property type="entry name" value="P-loop containing nucleotide triphosphate hydrolases"/>
    <property type="match status" value="2"/>
</dbReference>
<dbReference type="HAMAP" id="MF_00195">
    <property type="entry name" value="GTPase_Der"/>
    <property type="match status" value="1"/>
</dbReference>
<dbReference type="InterPro" id="IPR031166">
    <property type="entry name" value="G_ENGA"/>
</dbReference>
<dbReference type="InterPro" id="IPR006073">
    <property type="entry name" value="GTP-bd"/>
</dbReference>
<dbReference type="InterPro" id="IPR016484">
    <property type="entry name" value="GTPase_Der"/>
</dbReference>
<dbReference type="InterPro" id="IPR032859">
    <property type="entry name" value="KH_dom-like"/>
</dbReference>
<dbReference type="InterPro" id="IPR015946">
    <property type="entry name" value="KH_dom-like_a/b"/>
</dbReference>
<dbReference type="InterPro" id="IPR027417">
    <property type="entry name" value="P-loop_NTPase"/>
</dbReference>
<dbReference type="InterPro" id="IPR005225">
    <property type="entry name" value="Small_GTP-bd"/>
</dbReference>
<dbReference type="NCBIfam" id="TIGR03594">
    <property type="entry name" value="GTPase_EngA"/>
    <property type="match status" value="1"/>
</dbReference>
<dbReference type="NCBIfam" id="TIGR00231">
    <property type="entry name" value="small_GTP"/>
    <property type="match status" value="2"/>
</dbReference>
<dbReference type="PANTHER" id="PTHR43834">
    <property type="entry name" value="GTPASE DER"/>
    <property type="match status" value="1"/>
</dbReference>
<dbReference type="PANTHER" id="PTHR43834:SF6">
    <property type="entry name" value="GTPASE DER"/>
    <property type="match status" value="1"/>
</dbReference>
<dbReference type="Pfam" id="PF14714">
    <property type="entry name" value="KH_dom-like"/>
    <property type="match status" value="1"/>
</dbReference>
<dbReference type="Pfam" id="PF01926">
    <property type="entry name" value="MMR_HSR1"/>
    <property type="match status" value="2"/>
</dbReference>
<dbReference type="PIRSF" id="PIRSF006485">
    <property type="entry name" value="GTP-binding_EngA"/>
    <property type="match status" value="1"/>
</dbReference>
<dbReference type="PRINTS" id="PR00326">
    <property type="entry name" value="GTP1OBG"/>
</dbReference>
<dbReference type="SUPFAM" id="SSF52540">
    <property type="entry name" value="P-loop containing nucleoside triphosphate hydrolases"/>
    <property type="match status" value="2"/>
</dbReference>
<dbReference type="PROSITE" id="PS51712">
    <property type="entry name" value="G_ENGA"/>
    <property type="match status" value="2"/>
</dbReference>
<reference key="1">
    <citation type="journal article" date="2004" name="Proc. Natl. Acad. Sci. U.S.A.">
        <title>Genomic analysis of Bacteroides fragilis reveals extensive DNA inversions regulating cell surface adaptation.</title>
        <authorList>
            <person name="Kuwahara T."/>
            <person name="Yamashita A."/>
            <person name="Hirakawa H."/>
            <person name="Nakayama H."/>
            <person name="Toh H."/>
            <person name="Okada N."/>
            <person name="Kuhara S."/>
            <person name="Hattori M."/>
            <person name="Hayashi T."/>
            <person name="Ohnishi Y."/>
        </authorList>
    </citation>
    <scope>NUCLEOTIDE SEQUENCE [LARGE SCALE GENOMIC DNA]</scope>
    <source>
        <strain>YCH46</strain>
    </source>
</reference>
<sequence>MGNLVAIVGRPNVGKSTLFNRLTKTRQAIVNDEAGTTRDRQYGKSEWLGREFSVVDTGGWVVNSDDIFEEEIRKQVLMAVDEADVILFVVDVTNGVTDLDMQVAAILRRAKSPVIMVANKTDNHELRYNAPEFYRLGLGDPYCISAISGSGTGDLMDLIVSKFKKESDEILDEDIPRFAVVGRPNAGKSSIVNAFIGEERNIVTEIAGTTRDSIYTRYNKFGFDFYLVDTAGIRKKNKVNEDLEYYSVVRSIRAIEGADVCILMVDATRGIESQDLNIFSLIQKNSKGLVVVVNKWDLVENKTDKVMKTFEEAIRSRFAPFVDFPIVFASALTKQRILKVLEEARKVYENRMIKIPTARLNEEMLPLIEAYPPPATKGKYIKIKYVTQLPNTQVPSFVFFANLPQYVKEPYRRFLENKMREKWDLSGTPINIYIRQK</sequence>
<proteinExistence type="inferred from homology"/>